<comment type="function">
    <text evidence="2 3">Cytokine with antiviral, antitumour and immunomodulatory activities. Plays a critical role in the antiviral host defense, predominantly in the epithelial tissues. Acts as a ligand for the heterodimeric class II cytokine receptor composed of IL10RB and IFNLR1, and receptor engagement leads to the activation of the JAK/STAT signaling pathway resulting in the expression of IFN-stimulated genes (ISG), which mediate the antiviral state. Has a restricted receptor distribution and therefore restricted targets: is primarily active in epithelial cells and this cell type-selective action is because of the epithelial cell-specific expression of its receptor IFNLR1. Seems not to be essential for early virus-activated host defense in vaginal infection, but plays an important role in Toll-like receptor (TLR)-induced antiviral defense. Plays a significant role in the antiviral immune defense in the intestinal epithelium. Exerts an immunomodulatory effect by up-regulating MHC class I antigen expression.</text>
</comment>
<comment type="subcellular location">
    <subcellularLocation>
        <location evidence="3">Secreted</location>
    </subcellularLocation>
</comment>
<comment type="induction">
    <text evidence="2 3">By viral infections or double-stranded RNA.</text>
</comment>
<comment type="similarity">
    <text evidence="6">Belongs to the lambda interferon family.</text>
</comment>
<comment type="sequence caution" evidence="6">
    <conflict type="erroneous initiation">
        <sequence resource="EMBL-CDS" id="AAN28264"/>
    </conflict>
    <text>Extended N-terminus.</text>
</comment>
<protein>
    <recommendedName>
        <fullName>Interferon lambda-3</fullName>
        <shortName>IFN-lambda-3</shortName>
    </recommendedName>
    <alternativeName>
        <fullName>Cytokine Zcyto22</fullName>
    </alternativeName>
    <alternativeName>
        <fullName>Interleukin-28B</fullName>
        <shortName>IL-28B</shortName>
    </alternativeName>
    <alternativeName>
        <fullName>Interleukin-28C</fullName>
        <shortName>IL-28C</shortName>
    </alternativeName>
</protein>
<proteinExistence type="evidence at protein level"/>
<gene>
    <name type="primary">IFNL3</name>
    <name type="synonym">IL28B</name>
    <name type="synonym">IL28C</name>
    <name type="synonym">ZCYTO22</name>
</gene>
<dbReference type="EMBL" id="AY129149">
    <property type="protein sequence ID" value="AAN28264.1"/>
    <property type="status" value="ALT_INIT"/>
    <property type="molecule type" value="mRNA"/>
</dbReference>
<dbReference type="EMBL" id="AY184374">
    <property type="protein sequence ID" value="AAN86127.1"/>
    <property type="molecule type" value="mRNA"/>
</dbReference>
<dbReference type="EMBL" id="AY336714">
    <property type="protein sequence ID" value="AAR24509.1"/>
    <property type="molecule type" value="mRNA"/>
</dbReference>
<dbReference type="EMBL" id="AY336717">
    <property type="protein sequence ID" value="AAQ01561.1"/>
    <property type="molecule type" value="mRNA"/>
</dbReference>
<dbReference type="EMBL" id="AC011445">
    <property type="status" value="NOT_ANNOTATED_CDS"/>
    <property type="molecule type" value="Genomic_DNA"/>
</dbReference>
<dbReference type="EMBL" id="BC130314">
    <property type="protein sequence ID" value="AAI30315.1"/>
    <property type="molecule type" value="mRNA"/>
</dbReference>
<dbReference type="EMBL" id="BC130316">
    <property type="protein sequence ID" value="AAI30317.1"/>
    <property type="molecule type" value="mRNA"/>
</dbReference>
<dbReference type="CCDS" id="CCDS12530.1"/>
<dbReference type="RefSeq" id="NP_001333866.1">
    <property type="nucleotide sequence ID" value="NM_001346937.1"/>
</dbReference>
<dbReference type="RefSeq" id="NP_742151.2">
    <property type="nucleotide sequence ID" value="NM_172139.3"/>
</dbReference>
<dbReference type="PDB" id="3HHC">
    <property type="method" value="X-ray"/>
    <property type="resolution" value="2.80 A"/>
    <property type="chains" value="A/B/C/D=1-196"/>
</dbReference>
<dbReference type="PDB" id="5T5W">
    <property type="method" value="X-ray"/>
    <property type="resolution" value="2.85 A"/>
    <property type="chains" value="C=34-195"/>
</dbReference>
<dbReference type="PDB" id="9BPV">
    <property type="method" value="EM"/>
    <property type="resolution" value="3.00 A"/>
    <property type="chains" value="C=34-196"/>
</dbReference>
<dbReference type="PDBsum" id="3HHC"/>
<dbReference type="PDBsum" id="5T5W"/>
<dbReference type="PDBsum" id="9BPV"/>
<dbReference type="EMDB" id="EMD-44791"/>
<dbReference type="SMR" id="Q8IZI9"/>
<dbReference type="BioGRID" id="129395">
    <property type="interactions" value="10"/>
</dbReference>
<dbReference type="ComplexPortal" id="CPX-6013">
    <property type="entry name" value="Interferon lambda receptor-ligand complex, IFNL3 variant"/>
</dbReference>
<dbReference type="FunCoup" id="Q8IZI9">
    <property type="interactions" value="398"/>
</dbReference>
<dbReference type="IntAct" id="Q8IZI9">
    <property type="interactions" value="5"/>
</dbReference>
<dbReference type="MINT" id="Q8IZI9"/>
<dbReference type="STRING" id="9606.ENSP00000481633"/>
<dbReference type="GlyGen" id="Q8IZI9">
    <property type="glycosylation" value="1 site"/>
</dbReference>
<dbReference type="iPTMnet" id="Q8IZI9"/>
<dbReference type="PhosphoSitePlus" id="Q8IZI9"/>
<dbReference type="BioMuta" id="IFNL3"/>
<dbReference type="DMDM" id="300669648"/>
<dbReference type="jPOST" id="Q8IZI9"/>
<dbReference type="MassIVE" id="Q8IZI9"/>
<dbReference type="PaxDb" id="9606-ENSP00000409000"/>
<dbReference type="PeptideAtlas" id="Q8IZI9"/>
<dbReference type="Antibodypedia" id="54997">
    <property type="antibodies" value="377 antibodies from 30 providers"/>
</dbReference>
<dbReference type="DNASU" id="282617"/>
<dbReference type="Ensembl" id="ENST00000413851.3">
    <property type="protein sequence ID" value="ENSP00000409000.2"/>
    <property type="gene ID" value="ENSG00000197110.10"/>
</dbReference>
<dbReference type="Ensembl" id="ENST00000709043.1">
    <property type="protein sequence ID" value="ENSP00000517481.1"/>
    <property type="gene ID" value="ENSG00000291876.1"/>
</dbReference>
<dbReference type="GeneID" id="282617"/>
<dbReference type="KEGG" id="hsa:282617"/>
<dbReference type="MANE-Select" id="ENST00000413851.3">
    <property type="protein sequence ID" value="ENSP00000409000.2"/>
    <property type="RefSeq nucleotide sequence ID" value="NM_172139.4"/>
    <property type="RefSeq protein sequence ID" value="NP_742151.2"/>
</dbReference>
<dbReference type="UCSC" id="uc010xut.3">
    <property type="organism name" value="human"/>
</dbReference>
<dbReference type="AGR" id="HGNC:18365"/>
<dbReference type="CTD" id="282617"/>
<dbReference type="DisGeNET" id="282617"/>
<dbReference type="GeneCards" id="IFNL3"/>
<dbReference type="HGNC" id="HGNC:18365">
    <property type="gene designation" value="IFNL3"/>
</dbReference>
<dbReference type="HPA" id="ENSG00000197110">
    <property type="expression patterns" value="Not detected"/>
</dbReference>
<dbReference type="MalaCards" id="IFNL3"/>
<dbReference type="MIM" id="607402">
    <property type="type" value="gene"/>
</dbReference>
<dbReference type="neXtProt" id="NX_Q8IZI9"/>
<dbReference type="OpenTargets" id="ENSG00000197110"/>
<dbReference type="PharmGKB" id="PA134952671"/>
<dbReference type="VEuPathDB" id="HostDB:ENSG00000197110"/>
<dbReference type="eggNOG" id="ENOG502SSDC">
    <property type="taxonomic scope" value="Eukaryota"/>
</dbReference>
<dbReference type="GeneTree" id="ENSGT00390000014310"/>
<dbReference type="HOGENOM" id="CLU_120266_0_0_1"/>
<dbReference type="InParanoid" id="Q8IZI9"/>
<dbReference type="OMA" id="KAWSCRP"/>
<dbReference type="OrthoDB" id="7476at9604"/>
<dbReference type="PAN-GO" id="Q8IZI9">
    <property type="GO annotations" value="4 GO annotations based on evolutionary models"/>
</dbReference>
<dbReference type="PhylomeDB" id="Q8IZI9"/>
<dbReference type="TreeFam" id="TF336172"/>
<dbReference type="PathwayCommons" id="Q8IZI9"/>
<dbReference type="Reactome" id="R-HSA-8854691">
    <property type="pathway name" value="Interleukin-20 family signaling"/>
</dbReference>
<dbReference type="SignaLink" id="Q8IZI9"/>
<dbReference type="SIGNOR" id="Q8IZI9"/>
<dbReference type="BioGRID-ORCS" id="282617">
    <property type="hits" value="11 hits in 1051 CRISPR screens"/>
</dbReference>
<dbReference type="EvolutionaryTrace" id="Q8IZI9"/>
<dbReference type="GeneWiki" id="Interleukin_28B"/>
<dbReference type="GenomeRNAi" id="282617"/>
<dbReference type="Pharos" id="Q8IZI9">
    <property type="development level" value="Tbio"/>
</dbReference>
<dbReference type="PRO" id="PR:Q8IZI9"/>
<dbReference type="Proteomes" id="UP000005640">
    <property type="component" value="Chromosome 19"/>
</dbReference>
<dbReference type="RNAct" id="Q8IZI9">
    <property type="molecule type" value="protein"/>
</dbReference>
<dbReference type="Bgee" id="ENSG00000197110">
    <property type="expression patterns" value="Expressed in male germ line stem cell (sensu Vertebrata) in testis and 13 other cell types or tissues"/>
</dbReference>
<dbReference type="ExpressionAtlas" id="Q8IZI9">
    <property type="expression patterns" value="baseline and differential"/>
</dbReference>
<dbReference type="GO" id="GO:0005576">
    <property type="term" value="C:extracellular region"/>
    <property type="evidence" value="ECO:0000304"/>
    <property type="project" value="Reactome"/>
</dbReference>
<dbReference type="GO" id="GO:0005615">
    <property type="term" value="C:extracellular space"/>
    <property type="evidence" value="ECO:0000318"/>
    <property type="project" value="GO_Central"/>
</dbReference>
<dbReference type="GO" id="GO:0005125">
    <property type="term" value="F:cytokine activity"/>
    <property type="evidence" value="ECO:0007669"/>
    <property type="project" value="UniProtKB-KW"/>
</dbReference>
<dbReference type="GO" id="GO:0005102">
    <property type="term" value="F:signaling receptor binding"/>
    <property type="evidence" value="ECO:0000318"/>
    <property type="project" value="GO_Central"/>
</dbReference>
<dbReference type="GO" id="GO:0007259">
    <property type="term" value="P:cell surface receptor signaling pathway via JAK-STAT"/>
    <property type="evidence" value="ECO:0007669"/>
    <property type="project" value="InterPro"/>
</dbReference>
<dbReference type="GO" id="GO:0098586">
    <property type="term" value="P:cellular response to virus"/>
    <property type="evidence" value="ECO:0000303"/>
    <property type="project" value="ComplexPortal"/>
</dbReference>
<dbReference type="GO" id="GO:0051607">
    <property type="term" value="P:defense response to virus"/>
    <property type="evidence" value="ECO:0000250"/>
    <property type="project" value="UniProtKB"/>
</dbReference>
<dbReference type="GO" id="GO:0045087">
    <property type="term" value="P:innate immune response"/>
    <property type="evidence" value="ECO:0000318"/>
    <property type="project" value="GO_Central"/>
</dbReference>
<dbReference type="GO" id="GO:0045071">
    <property type="term" value="P:negative regulation of viral genome replication"/>
    <property type="evidence" value="ECO:0000250"/>
    <property type="project" value="UniProtKB"/>
</dbReference>
<dbReference type="GO" id="GO:0050778">
    <property type="term" value="P:positive regulation of immune response"/>
    <property type="evidence" value="ECO:0007669"/>
    <property type="project" value="InterPro"/>
</dbReference>
<dbReference type="GO" id="GO:0038196">
    <property type="term" value="P:type III interferon-mediated signaling pathway"/>
    <property type="evidence" value="ECO:0000303"/>
    <property type="project" value="ComplexPortal"/>
</dbReference>
<dbReference type="FunFam" id="1.20.1250.60:FF:000001">
    <property type="entry name" value="Interferon lambda 1"/>
    <property type="match status" value="1"/>
</dbReference>
<dbReference type="Gene3D" id="1.20.1250.60">
    <property type="entry name" value="Interferon lambda"/>
    <property type="match status" value="1"/>
</dbReference>
<dbReference type="InterPro" id="IPR038326">
    <property type="entry name" value="IFN-lambda_sf"/>
</dbReference>
<dbReference type="InterPro" id="IPR029177">
    <property type="entry name" value="INF_lambda"/>
</dbReference>
<dbReference type="PANTHER" id="PTHR31943:SF1">
    <property type="entry name" value="INTERFERON LAMBDA-2-RELATED"/>
    <property type="match status" value="1"/>
</dbReference>
<dbReference type="PANTHER" id="PTHR31943">
    <property type="entry name" value="INTERLEUKIN-28 AND 29"/>
    <property type="match status" value="1"/>
</dbReference>
<dbReference type="Pfam" id="PF15177">
    <property type="entry name" value="IL28A"/>
    <property type="match status" value="1"/>
</dbReference>
<accession>Q8IZI9</accession>
<accession>A2BDE1</accession>
<accession>Q6VN56</accession>
<accession>Q7Z4J3</accession>
<accession>Q8IWL6</accession>
<reference key="1">
    <citation type="journal article" date="2003" name="Nat. Immunol.">
        <title>IL-28, IL-29 and their class II cytokine receptor IL-28R.</title>
        <authorList>
            <person name="Sheppard P."/>
            <person name="Kindsvogel W."/>
            <person name="Xu W."/>
            <person name="Henderson K."/>
            <person name="Schlutsmeyer S."/>
            <person name="Whitmore T.E."/>
            <person name="Kuestner R."/>
            <person name="Garrigues U."/>
            <person name="Birks C."/>
            <person name="Roraback J."/>
            <person name="Ostrander C."/>
            <person name="Dong D."/>
            <person name="Shin J."/>
            <person name="Presnell S."/>
            <person name="Fox B."/>
            <person name="Haldeman B."/>
            <person name="Cooper E."/>
            <person name="Taft D."/>
            <person name="Gilbert T."/>
            <person name="Grant F.J."/>
            <person name="Tackett M."/>
            <person name="Krivan W."/>
            <person name="McKnight G."/>
            <person name="Clegg C."/>
            <person name="Foster D."/>
            <person name="Klucher K.M."/>
        </authorList>
    </citation>
    <scope>NUCLEOTIDE SEQUENCE [MRNA]</scope>
    <scope>FUNCTION</scope>
    <scope>INDUCTION</scope>
</reference>
<reference key="2">
    <citation type="journal article" date="2003" name="Nat. Immunol.">
        <title>IFN-lambdas mediate antiviral protection through a distinct class II cytokine receptor complex.</title>
        <authorList>
            <person name="Kotenko S.V."/>
            <person name="Gallagher G."/>
            <person name="Baurin V.V."/>
            <person name="Lewis-Antes A."/>
            <person name="Shen M."/>
            <person name="Shah N.K."/>
            <person name="Langer J.A."/>
            <person name="Sheikh F."/>
            <person name="Dickensheets H."/>
            <person name="Donnelly R.P."/>
        </authorList>
    </citation>
    <scope>NUCLEOTIDE SEQUENCE [MRNA]</scope>
    <scope>FUNCTION</scope>
    <scope>SUBCELLULAR LOCATION</scope>
    <scope>INDUCTION</scope>
</reference>
<reference key="3">
    <citation type="journal article" date="2006" name="Acta Pharmacol. Sin.">
        <title>Liposome-mediated IL-28 and IL-29 expression in A549 cells and anti-viral effect of IL-28 and IL-29 on WISH cells.</title>
        <authorList>
            <person name="Li M.C."/>
            <person name="Wang H.Y."/>
            <person name="Wang H.Y."/>
            <person name="Li T."/>
            <person name="He S.H."/>
        </authorList>
    </citation>
    <scope>NUCLEOTIDE SEQUENCE [MRNA]</scope>
    <scope>VARIANT ARG-70</scope>
    <source>
        <tissue>Peripheral blood leukocyte</tissue>
    </source>
</reference>
<reference key="4">
    <citation type="journal article" date="2004" name="Nature">
        <title>The DNA sequence and biology of human chromosome 19.</title>
        <authorList>
            <person name="Grimwood J."/>
            <person name="Gordon L.A."/>
            <person name="Olsen A.S."/>
            <person name="Terry A."/>
            <person name="Schmutz J."/>
            <person name="Lamerdin J.E."/>
            <person name="Hellsten U."/>
            <person name="Goodstein D."/>
            <person name="Couronne O."/>
            <person name="Tran-Gyamfi M."/>
            <person name="Aerts A."/>
            <person name="Altherr M."/>
            <person name="Ashworth L."/>
            <person name="Bajorek E."/>
            <person name="Black S."/>
            <person name="Branscomb E."/>
            <person name="Caenepeel S."/>
            <person name="Carrano A.V."/>
            <person name="Caoile C."/>
            <person name="Chan Y.M."/>
            <person name="Christensen M."/>
            <person name="Cleland C.A."/>
            <person name="Copeland A."/>
            <person name="Dalin E."/>
            <person name="Dehal P."/>
            <person name="Denys M."/>
            <person name="Detter J.C."/>
            <person name="Escobar J."/>
            <person name="Flowers D."/>
            <person name="Fotopulos D."/>
            <person name="Garcia C."/>
            <person name="Georgescu A.M."/>
            <person name="Glavina T."/>
            <person name="Gomez M."/>
            <person name="Gonzales E."/>
            <person name="Groza M."/>
            <person name="Hammon N."/>
            <person name="Hawkins T."/>
            <person name="Haydu L."/>
            <person name="Ho I."/>
            <person name="Huang W."/>
            <person name="Israni S."/>
            <person name="Jett J."/>
            <person name="Kadner K."/>
            <person name="Kimball H."/>
            <person name="Kobayashi A."/>
            <person name="Larionov V."/>
            <person name="Leem S.-H."/>
            <person name="Lopez F."/>
            <person name="Lou Y."/>
            <person name="Lowry S."/>
            <person name="Malfatti S."/>
            <person name="Martinez D."/>
            <person name="McCready P.M."/>
            <person name="Medina C."/>
            <person name="Morgan J."/>
            <person name="Nelson K."/>
            <person name="Nolan M."/>
            <person name="Ovcharenko I."/>
            <person name="Pitluck S."/>
            <person name="Pollard M."/>
            <person name="Popkie A.P."/>
            <person name="Predki P."/>
            <person name="Quan G."/>
            <person name="Ramirez L."/>
            <person name="Rash S."/>
            <person name="Retterer J."/>
            <person name="Rodriguez A."/>
            <person name="Rogers S."/>
            <person name="Salamov A."/>
            <person name="Salazar A."/>
            <person name="She X."/>
            <person name="Smith D."/>
            <person name="Slezak T."/>
            <person name="Solovyev V."/>
            <person name="Thayer N."/>
            <person name="Tice H."/>
            <person name="Tsai M."/>
            <person name="Ustaszewska A."/>
            <person name="Vo N."/>
            <person name="Wagner M."/>
            <person name="Wheeler J."/>
            <person name="Wu K."/>
            <person name="Xie G."/>
            <person name="Yang J."/>
            <person name="Dubchak I."/>
            <person name="Furey T.S."/>
            <person name="DeJong P."/>
            <person name="Dickson M."/>
            <person name="Gordon D."/>
            <person name="Eichler E.E."/>
            <person name="Pennacchio L.A."/>
            <person name="Richardson P."/>
            <person name="Stubbs L."/>
            <person name="Rokhsar D.S."/>
            <person name="Myers R.M."/>
            <person name="Rubin E.M."/>
            <person name="Lucas S.M."/>
        </authorList>
    </citation>
    <scope>NUCLEOTIDE SEQUENCE [LARGE SCALE GENOMIC DNA]</scope>
</reference>
<reference key="5">
    <citation type="journal article" date="2004" name="Genome Res.">
        <title>The status, quality, and expansion of the NIH full-length cDNA project: the Mammalian Gene Collection (MGC).</title>
        <authorList>
            <consortium name="The MGC Project Team"/>
        </authorList>
    </citation>
    <scope>NUCLEOTIDE SEQUENCE [LARGE SCALE MRNA]</scope>
</reference>
<reference key="6">
    <citation type="journal article" date="2010" name="J. Interferon Cytokine Res.">
        <title>Interferon-lambda: a new addition to an old family.</title>
        <authorList>
            <person name="Donnelly R.P."/>
            <person name="Kotenko S.V."/>
        </authorList>
    </citation>
    <scope>REVIEW</scope>
</reference>
<reference key="7">
    <citation type="journal article" date="2014" name="J. Innate Immun.">
        <title>Interferon-lambda in the context of viral infections: production, response and therapeutic implications.</title>
        <authorList>
            <person name="Hermant P."/>
            <person name="Michiels T."/>
        </authorList>
    </citation>
    <scope>REVIEW</scope>
</reference>
<reference key="8">
    <citation type="journal article" date="2009" name="J. Biol. Chem.">
        <title>Interferon-lambda is functionally an interferon but structurally related to the interleukin-10 family.</title>
        <authorList>
            <person name="Gad H.H."/>
            <person name="Dellgren C."/>
            <person name="Hamming O.J."/>
            <person name="Vends S."/>
            <person name="Paludan S.R."/>
            <person name="Hartmann R."/>
        </authorList>
    </citation>
    <scope>X-RAY CRYSTALLOGRAPHY (2.8 ANGSTROMS)</scope>
    <scope>DISULFIDE BONDS</scope>
    <scope>MUTAGENESIS OF LYS-57; ASP-58; VAL-118; GLN-121; PHE-176 AND PHE-179</scope>
</reference>
<name>IFNL3_HUMAN</name>
<sequence length="196" mass="21706">MTGDCMPVLVLMAAVLTVTGAVPVARLRGALPDARGCHIAQFKSLSPQELQAFKRAKDALEESLLLKDCKCRSRLFPRTWDLRQLQVRERPVALEAELALTLKVLEATADTDPALGDVLDQPLHTLHHILSQLRACIQPQPTAGPRTRGRLHHWLHRLQEAPKKESPGCLEASVTFNLFRLLTRDLNCVASGDLCV</sequence>
<evidence type="ECO:0000255" key="1"/>
<evidence type="ECO:0000269" key="2">
    <source>
    </source>
</evidence>
<evidence type="ECO:0000269" key="3">
    <source>
    </source>
</evidence>
<evidence type="ECO:0000269" key="4">
    <source>
    </source>
</evidence>
<evidence type="ECO:0000269" key="5">
    <source>
    </source>
</evidence>
<evidence type="ECO:0000305" key="6"/>
<evidence type="ECO:0007829" key="7">
    <source>
        <dbReference type="PDB" id="3HHC"/>
    </source>
</evidence>
<feature type="signal peptide" evidence="1">
    <location>
        <begin position="1"/>
        <end position="21"/>
    </location>
</feature>
<feature type="chain" id="PRO_0000015510" description="Interferon lambda-3">
    <location>
        <begin position="22"/>
        <end position="196"/>
    </location>
</feature>
<feature type="disulfide bond" evidence="5">
    <location>
        <begin position="37"/>
        <end position="136"/>
    </location>
</feature>
<feature type="disulfide bond" evidence="5">
    <location>
        <begin position="71"/>
        <end position="169"/>
    </location>
</feature>
<feature type="disulfide bond" evidence="5">
    <location>
        <begin position="188"/>
        <end position="195"/>
    </location>
</feature>
<feature type="sequence variant" id="VAR_063419" description="In dbSNP:rs629976.">
    <original>R</original>
    <variation>H</variation>
    <location>
        <position position="28"/>
    </location>
</feature>
<feature type="sequence variant" id="VAR_063420" description="In dbSNP:rs8103142." evidence="4">
    <original>K</original>
    <variation>R</variation>
    <location>
        <position position="70"/>
    </location>
</feature>
<feature type="mutagenesis site" description="51 fold decrease in antiviral activity." evidence="5">
    <original>K</original>
    <variation>A</variation>
    <location>
        <position position="57"/>
    </location>
</feature>
<feature type="mutagenesis site" description="43 fold decrease in antiviral activity." evidence="5">
    <original>D</original>
    <variation>A</variation>
    <location>
        <position position="58"/>
    </location>
</feature>
<feature type="mutagenesis site" description="68 fold decrease in antiviral activity." evidence="5">
    <original>V</original>
    <variation>A</variation>
    <location>
        <position position="118"/>
    </location>
</feature>
<feature type="mutagenesis site" description="46 fold decrease in antiviral activity." evidence="5">
    <original>Q</original>
    <variation>A</variation>
    <location>
        <position position="121"/>
    </location>
</feature>
<feature type="mutagenesis site" description="40 fold decrease in antiviral activity." evidence="5">
    <original>F</original>
    <variation>A</variation>
    <location>
        <position position="176"/>
    </location>
</feature>
<feature type="mutagenesis site" description="650 fold decrease in antiviral activity." evidence="5">
    <original>F</original>
    <variation>A</variation>
    <location>
        <position position="179"/>
    </location>
</feature>
<feature type="sequence conflict" description="In Ref. 2; AAN86127." evidence="6" ref="2">
    <original>T</original>
    <variation>S</variation>
    <location>
        <position position="108"/>
    </location>
</feature>
<feature type="sequence conflict" description="In Ref. 3; AAQ01561." evidence="6" ref="3">
    <original>D</original>
    <variation>G</variation>
    <location>
        <position position="120"/>
    </location>
</feature>
<feature type="sequence conflict" description="In Ref. 3; AAQ01561." evidence="6" ref="3">
    <original>L</original>
    <variation>P</variation>
    <location>
        <position position="155"/>
    </location>
</feature>
<feature type="sequence conflict" description="In Ref. 2; AAN86127." evidence="6" ref="2">
    <original>H</original>
    <variation>Y</variation>
    <location>
        <position position="156"/>
    </location>
</feature>
<feature type="helix" evidence="7">
    <location>
        <begin position="40"/>
        <end position="42"/>
    </location>
</feature>
<feature type="helix" evidence="7">
    <location>
        <begin position="47"/>
        <end position="65"/>
    </location>
</feature>
<feature type="strand" evidence="7">
    <location>
        <begin position="71"/>
        <end position="73"/>
    </location>
</feature>
<feature type="helix" evidence="7">
    <location>
        <begin position="82"/>
        <end position="84"/>
    </location>
</feature>
<feature type="helix" evidence="7">
    <location>
        <begin position="87"/>
        <end position="89"/>
    </location>
</feature>
<feature type="helix" evidence="7">
    <location>
        <begin position="90"/>
        <end position="111"/>
    </location>
</feature>
<feature type="helix" evidence="7">
    <location>
        <begin position="113"/>
        <end position="134"/>
    </location>
</feature>
<feature type="helix" evidence="7">
    <location>
        <begin position="150"/>
        <end position="159"/>
    </location>
</feature>
<feature type="helix" evidence="7">
    <location>
        <begin position="161"/>
        <end position="163"/>
    </location>
</feature>
<feature type="helix" evidence="7">
    <location>
        <begin position="167"/>
        <end position="176"/>
    </location>
</feature>
<feature type="helix" evidence="7">
    <location>
        <begin position="178"/>
        <end position="182"/>
    </location>
</feature>
<feature type="helix" evidence="7">
    <location>
        <begin position="184"/>
        <end position="190"/>
    </location>
</feature>
<feature type="helix" evidence="7">
    <location>
        <begin position="191"/>
        <end position="194"/>
    </location>
</feature>
<organism>
    <name type="scientific">Homo sapiens</name>
    <name type="common">Human</name>
    <dbReference type="NCBI Taxonomy" id="9606"/>
    <lineage>
        <taxon>Eukaryota</taxon>
        <taxon>Metazoa</taxon>
        <taxon>Chordata</taxon>
        <taxon>Craniata</taxon>
        <taxon>Vertebrata</taxon>
        <taxon>Euteleostomi</taxon>
        <taxon>Mammalia</taxon>
        <taxon>Eutheria</taxon>
        <taxon>Euarchontoglires</taxon>
        <taxon>Primates</taxon>
        <taxon>Haplorrhini</taxon>
        <taxon>Catarrhini</taxon>
        <taxon>Hominidae</taxon>
        <taxon>Homo</taxon>
    </lineage>
</organism>
<keyword id="KW-0002">3D-structure</keyword>
<keyword id="KW-0051">Antiviral defense</keyword>
<keyword id="KW-0202">Cytokine</keyword>
<keyword id="KW-1015">Disulfide bond</keyword>
<keyword id="KW-1185">Reference proteome</keyword>
<keyword id="KW-0964">Secreted</keyword>
<keyword id="KW-0732">Signal</keyword>